<organism>
    <name type="scientific">Haemophilus ducreyi (strain 35000HP / ATCC 700724)</name>
    <dbReference type="NCBI Taxonomy" id="233412"/>
    <lineage>
        <taxon>Bacteria</taxon>
        <taxon>Pseudomonadati</taxon>
        <taxon>Pseudomonadota</taxon>
        <taxon>Gammaproteobacteria</taxon>
        <taxon>Pasteurellales</taxon>
        <taxon>Pasteurellaceae</taxon>
        <taxon>Haemophilus</taxon>
    </lineage>
</organism>
<comment type="function">
    <text evidence="1">Catalyzes the decarboxylation of oxaloacetate coupled to Na(+) translocation.</text>
</comment>
<comment type="catalytic activity">
    <reaction>
        <text>oxaloacetate + 2 Na(+)(in) + H(+) = pyruvate + 2 Na(+)(out) + CO2</text>
        <dbReference type="Rhea" id="RHEA:57724"/>
        <dbReference type="ChEBI" id="CHEBI:15361"/>
        <dbReference type="ChEBI" id="CHEBI:15378"/>
        <dbReference type="ChEBI" id="CHEBI:16452"/>
        <dbReference type="ChEBI" id="CHEBI:16526"/>
        <dbReference type="ChEBI" id="CHEBI:29101"/>
        <dbReference type="EC" id="7.2.4.2"/>
    </reaction>
</comment>
<comment type="cofactor">
    <cofactor evidence="1">
        <name>Na(+)</name>
        <dbReference type="ChEBI" id="CHEBI:29101"/>
    </cofactor>
</comment>
<comment type="subunit">
    <text evidence="1">Heterotrimer of an alpha, a beta and a gamma subunit.</text>
</comment>
<comment type="subcellular location">
    <subcellularLocation>
        <location evidence="1">Cell membrane</location>
        <topology evidence="1">Single-pass membrane protein</topology>
    </subcellularLocation>
</comment>
<comment type="similarity">
    <text evidence="3">Belongs to the OadG family.</text>
</comment>
<protein>
    <recommendedName>
        <fullName>Oxaloacetate decarboxylase gamma chain</fullName>
        <ecNumber>7.2.4.2</ecNumber>
    </recommendedName>
</protein>
<sequence length="85" mass="9513">MTNAELFGEGINLMIAGMGFVMFFLIILIYAISVISRLINKYFPDPTQTPPAQPIPAVIPPTDLERLRPVIVAAIAHHRRQQRSN</sequence>
<evidence type="ECO:0000250" key="1"/>
<evidence type="ECO:0000255" key="2"/>
<evidence type="ECO:0000305" key="3"/>
<keyword id="KW-1003">Cell membrane</keyword>
<keyword id="KW-0406">Ion transport</keyword>
<keyword id="KW-0472">Membrane</keyword>
<keyword id="KW-1185">Reference proteome</keyword>
<keyword id="KW-0915">Sodium</keyword>
<keyword id="KW-0739">Sodium transport</keyword>
<keyword id="KW-1278">Translocase</keyword>
<keyword id="KW-0812">Transmembrane</keyword>
<keyword id="KW-1133">Transmembrane helix</keyword>
<keyword id="KW-0813">Transport</keyword>
<gene>
    <name type="primary">oadG</name>
    <name type="ordered locus">HD_0784</name>
</gene>
<proteinExistence type="inferred from homology"/>
<dbReference type="EC" id="7.2.4.2"/>
<dbReference type="EMBL" id="AE017143">
    <property type="protein sequence ID" value="AAP95687.1"/>
    <property type="molecule type" value="Genomic_DNA"/>
</dbReference>
<dbReference type="EMBL" id="AF200362">
    <property type="protein sequence ID" value="AAF14625.1"/>
    <property type="molecule type" value="Genomic_DNA"/>
</dbReference>
<dbReference type="RefSeq" id="WP_010944737.1">
    <property type="nucleotide sequence ID" value="NC_002940.2"/>
</dbReference>
<dbReference type="SMR" id="Q9RFA0"/>
<dbReference type="STRING" id="233412.HD_0784"/>
<dbReference type="KEGG" id="hdu:HD_0784"/>
<dbReference type="eggNOG" id="COG3630">
    <property type="taxonomic scope" value="Bacteria"/>
</dbReference>
<dbReference type="HOGENOM" id="CLU_168750_3_2_6"/>
<dbReference type="OrthoDB" id="5772594at2"/>
<dbReference type="Proteomes" id="UP000001022">
    <property type="component" value="Chromosome"/>
</dbReference>
<dbReference type="GO" id="GO:0005886">
    <property type="term" value="C:plasma membrane"/>
    <property type="evidence" value="ECO:0007669"/>
    <property type="project" value="UniProtKB-SubCell"/>
</dbReference>
<dbReference type="GO" id="GO:0015451">
    <property type="term" value="F:decarboxylation-driven active transmembrane transporter activity"/>
    <property type="evidence" value="ECO:0007669"/>
    <property type="project" value="UniProtKB-EC"/>
</dbReference>
<dbReference type="GO" id="GO:0008948">
    <property type="term" value="F:oxaloacetate decarboxylase activity"/>
    <property type="evidence" value="ECO:0007669"/>
    <property type="project" value="UniProtKB-UniRule"/>
</dbReference>
<dbReference type="GO" id="GO:0015081">
    <property type="term" value="F:sodium ion transmembrane transporter activity"/>
    <property type="evidence" value="ECO:0007669"/>
    <property type="project" value="UniProtKB-UniRule"/>
</dbReference>
<dbReference type="GO" id="GO:0036376">
    <property type="term" value="P:sodium ion export across plasma membrane"/>
    <property type="evidence" value="ECO:0007669"/>
    <property type="project" value="InterPro"/>
</dbReference>
<dbReference type="HAMAP" id="MF_00404">
    <property type="entry name" value="OadG"/>
    <property type="match status" value="1"/>
</dbReference>
<dbReference type="InterPro" id="IPR005899">
    <property type="entry name" value="Na_pump_deCOase"/>
</dbReference>
<dbReference type="InterPro" id="IPR023424">
    <property type="entry name" value="OadG"/>
</dbReference>
<dbReference type="NCBIfam" id="TIGR01195">
    <property type="entry name" value="oadG_fam"/>
    <property type="match status" value="1"/>
</dbReference>
<dbReference type="NCBIfam" id="NF002792">
    <property type="entry name" value="PRK02919.1"/>
    <property type="match status" value="1"/>
</dbReference>
<dbReference type="Pfam" id="PF04277">
    <property type="entry name" value="OAD_gamma"/>
    <property type="match status" value="1"/>
</dbReference>
<reference key="1">
    <citation type="submission" date="2003-06" db="EMBL/GenBank/DDBJ databases">
        <title>The complete genome sequence of Haemophilus ducreyi.</title>
        <authorList>
            <person name="Munson R.S. Jr."/>
            <person name="Ray W.C."/>
            <person name="Mahairas G."/>
            <person name="Sabo P."/>
            <person name="Mungur R."/>
            <person name="Johnson L."/>
            <person name="Nguyen D."/>
            <person name="Wang J."/>
            <person name="Forst C."/>
            <person name="Hood L."/>
        </authorList>
    </citation>
    <scope>NUCLEOTIDE SEQUENCE [LARGE SCALE GENOMIC DNA]</scope>
    <source>
        <strain>35000HP / ATCC 700724</strain>
    </source>
</reference>
<reference key="2">
    <citation type="submission" date="1999-10" db="EMBL/GenBank/DDBJ databases">
        <title>Identification of a putative oxaloacetate decarboxylase and cytochrome-c-peroxidase in Haemophilus ducreyi.</title>
        <authorList>
            <person name="Zaretzky F.R."/>
            <person name="Cole L.E."/>
            <person name="Kawula T.H."/>
        </authorList>
    </citation>
    <scope>NUCLEOTIDE SEQUENCE [GENOMIC DNA] OF 15-85</scope>
    <source>
        <strain>35000HP / ATCC 700724</strain>
    </source>
</reference>
<accession>Q9RFA0</accession>
<feature type="chain" id="PRO_0000216450" description="Oxaloacetate decarboxylase gamma chain">
    <location>
        <begin position="1"/>
        <end position="85"/>
    </location>
</feature>
<feature type="transmembrane region" description="Helical" evidence="2">
    <location>
        <begin position="15"/>
        <end position="35"/>
    </location>
</feature>
<feature type="sequence conflict" description="In Ref. 2; AAF14625." evidence="3" ref="2">
    <original>I</original>
    <variation>L</variation>
    <location>
        <position position="15"/>
    </location>
</feature>
<name>OADG_HAEDU</name>